<keyword id="KW-0119">Carbohydrate metabolism</keyword>
<keyword id="KW-0326">Glycosidase</keyword>
<keyword id="KW-0378">Hydrolase</keyword>
<keyword id="KW-0511">Multifunctional enzyme</keyword>
<keyword id="KW-0624">Polysaccharide degradation</keyword>
<keyword id="KW-1185">Reference proteome</keyword>
<keyword id="KW-0858">Xylan degradation</keyword>
<accession>P77713</accession>
<accession>Q2MCF1</accession>
<feature type="chain" id="PRO_0000057697" description="Putative beta-xylosidase">
    <location>
        <begin position="1"/>
        <end position="536"/>
    </location>
</feature>
<feature type="active site" description="Proton acceptor" evidence="1">
    <location>
        <position position="14"/>
    </location>
</feature>
<feature type="active site" description="Proton donor" evidence="1">
    <location>
        <position position="186"/>
    </location>
</feature>
<feature type="site" description="Important for catalytic activity, responsible for pKa modulation of the active site Glu and correct orientation of both the proton donor and substrate" evidence="1">
    <location>
        <position position="127"/>
    </location>
</feature>
<protein>
    <recommendedName>
        <fullName>Putative beta-xylosidase</fullName>
        <ecNumber>3.2.1.37</ecNumber>
    </recommendedName>
    <alternativeName>
        <fullName>1,4-beta-D-xylan xylohydrolase</fullName>
    </alternativeName>
    <alternativeName>
        <fullName>Xylan 1,4-beta-xylosidase</fullName>
    </alternativeName>
</protein>
<comment type="catalytic activity">
    <reaction>
        <text>Hydrolysis of (1-&gt;4)-beta-D-xylans, to remove successive D-xylose residues from the non-reducing termini.</text>
        <dbReference type="EC" id="3.2.1.37"/>
    </reaction>
</comment>
<comment type="similarity">
    <text evidence="2">Belongs to the glycosyl hydrolase 43 family.</text>
</comment>
<gene>
    <name type="primary">yagH</name>
    <name type="ordered locus">b0271</name>
    <name type="ordered locus">JW0264</name>
</gene>
<name>YAGH_ECOLI</name>
<sequence>MEITNPILTGFNPDPSLCRQGEDYYIATSTFEWFPGVRIYHSRDLKNWSLVSTPLDRVSMLDMKGNPDSGGIWAPCLSYADGKFWLLYTDVKIVDSPWKNGRNFLVTAPSIEGPWSEPIPMGNGGFDPSLFHDDDGRKYYIYRPWGPRHHSNPHNTIVLQAFDPQTGTLSPERKTLFTGTPLCYTEGAHLYRHAGWYYLMAAEGGTSYEHAVVVLRSKNIDGPYELHPDVTMMTSWHLPENPLQKSGHGSLLQTHTGEWYMAYLTSRPLRLPGVPLLASGGRGYCPLGRETGIARIEWRDGWPYVEGGKHAQLTVKGPQVAEQPAAVPGNWRDDFDASSLDPELQTLRIPFDDTLGSLTARPGFLRLYGNDSLNSTFTQSTVARRWQHFAFRAETRMEFSPVHFQQSAGLTCYYNSKNWSYCFVDYEEGQGRTIKVIQLDHNVPSWPLHEQPIPVPEHAESVWLRVDVDTLVYRYSYSFDGETWHTVPVTYEAWKLSDDYIGGRGFFTGAFVGLHCEDISGDGCYADFDYFTYEPV</sequence>
<organism>
    <name type="scientific">Escherichia coli (strain K12)</name>
    <dbReference type="NCBI Taxonomy" id="83333"/>
    <lineage>
        <taxon>Bacteria</taxon>
        <taxon>Pseudomonadati</taxon>
        <taxon>Pseudomonadota</taxon>
        <taxon>Gammaproteobacteria</taxon>
        <taxon>Enterobacterales</taxon>
        <taxon>Enterobacteriaceae</taxon>
        <taxon>Escherichia</taxon>
    </lineage>
</organism>
<reference key="1">
    <citation type="submission" date="1997-01" db="EMBL/GenBank/DDBJ databases">
        <title>Sequence of minutes 4-25 of Escherichia coli.</title>
        <authorList>
            <person name="Chung E."/>
            <person name="Allen E."/>
            <person name="Araujo R."/>
            <person name="Aparicio A.M."/>
            <person name="Davis K."/>
            <person name="Duncan M."/>
            <person name="Federspiel N."/>
            <person name="Hyman R."/>
            <person name="Kalman S."/>
            <person name="Komp C."/>
            <person name="Kurdi O."/>
            <person name="Lew H."/>
            <person name="Lin D."/>
            <person name="Namath A."/>
            <person name="Oefner P."/>
            <person name="Roberts D."/>
            <person name="Schramm S."/>
            <person name="Davis R.W."/>
        </authorList>
    </citation>
    <scope>NUCLEOTIDE SEQUENCE [LARGE SCALE GENOMIC DNA]</scope>
    <source>
        <strain>K12 / MG1655 / ATCC 47076</strain>
    </source>
</reference>
<reference key="2">
    <citation type="journal article" date="1997" name="Science">
        <title>The complete genome sequence of Escherichia coli K-12.</title>
        <authorList>
            <person name="Blattner F.R."/>
            <person name="Plunkett G. III"/>
            <person name="Bloch C.A."/>
            <person name="Perna N.T."/>
            <person name="Burland V."/>
            <person name="Riley M."/>
            <person name="Collado-Vides J."/>
            <person name="Glasner J.D."/>
            <person name="Rode C.K."/>
            <person name="Mayhew G.F."/>
            <person name="Gregor J."/>
            <person name="Davis N.W."/>
            <person name="Kirkpatrick H.A."/>
            <person name="Goeden M.A."/>
            <person name="Rose D.J."/>
            <person name="Mau B."/>
            <person name="Shao Y."/>
        </authorList>
    </citation>
    <scope>NUCLEOTIDE SEQUENCE [LARGE SCALE GENOMIC DNA]</scope>
    <source>
        <strain>K12 / MG1655 / ATCC 47076</strain>
    </source>
</reference>
<reference key="3">
    <citation type="journal article" date="2006" name="Mol. Syst. Biol.">
        <title>Highly accurate genome sequences of Escherichia coli K-12 strains MG1655 and W3110.</title>
        <authorList>
            <person name="Hayashi K."/>
            <person name="Morooka N."/>
            <person name="Yamamoto Y."/>
            <person name="Fujita K."/>
            <person name="Isono K."/>
            <person name="Choi S."/>
            <person name="Ohtsubo E."/>
            <person name="Baba T."/>
            <person name="Wanner B.L."/>
            <person name="Mori H."/>
            <person name="Horiuchi T."/>
        </authorList>
    </citation>
    <scope>NUCLEOTIDE SEQUENCE [LARGE SCALE GENOMIC DNA]</scope>
    <source>
        <strain>K12 / W3110 / ATCC 27325 / DSM 5911</strain>
    </source>
</reference>
<proteinExistence type="inferred from homology"/>
<evidence type="ECO:0000250" key="1">
    <source>
        <dbReference type="UniProtKB" id="A7LXU0"/>
    </source>
</evidence>
<evidence type="ECO:0000305" key="2"/>
<dbReference type="EC" id="3.2.1.37"/>
<dbReference type="EMBL" id="U70214">
    <property type="protein sequence ID" value="AAB08692.1"/>
    <property type="molecule type" value="Genomic_DNA"/>
</dbReference>
<dbReference type="EMBL" id="U00096">
    <property type="protein sequence ID" value="AAC73374.1"/>
    <property type="molecule type" value="Genomic_DNA"/>
</dbReference>
<dbReference type="EMBL" id="AP009048">
    <property type="protein sequence ID" value="BAE76055.1"/>
    <property type="molecule type" value="Genomic_DNA"/>
</dbReference>
<dbReference type="PIR" id="G64752">
    <property type="entry name" value="G64752"/>
</dbReference>
<dbReference type="RefSeq" id="NP_414805.1">
    <property type="nucleotide sequence ID" value="NC_000913.3"/>
</dbReference>
<dbReference type="RefSeq" id="WP_000406871.1">
    <property type="nucleotide sequence ID" value="NZ_LN832404.1"/>
</dbReference>
<dbReference type="SMR" id="P77713"/>
<dbReference type="BioGRID" id="4261986">
    <property type="interactions" value="15"/>
</dbReference>
<dbReference type="FunCoup" id="P77713">
    <property type="interactions" value="111"/>
</dbReference>
<dbReference type="IntAct" id="P77713">
    <property type="interactions" value="5"/>
</dbReference>
<dbReference type="STRING" id="511145.b0271"/>
<dbReference type="CAZy" id="GH43">
    <property type="family name" value="Glycoside Hydrolase Family 43"/>
</dbReference>
<dbReference type="jPOST" id="P77713"/>
<dbReference type="PaxDb" id="511145-b0271"/>
<dbReference type="EnsemblBacteria" id="AAC73374">
    <property type="protein sequence ID" value="AAC73374"/>
    <property type="gene ID" value="b0271"/>
</dbReference>
<dbReference type="GeneID" id="944949"/>
<dbReference type="KEGG" id="ecj:JW0264"/>
<dbReference type="KEGG" id="eco:b0271"/>
<dbReference type="KEGG" id="ecoc:C3026_01315"/>
<dbReference type="PATRIC" id="fig|1411691.4.peg.2009"/>
<dbReference type="EchoBASE" id="EB3131"/>
<dbReference type="eggNOG" id="COG3507">
    <property type="taxonomic scope" value="Bacteria"/>
</dbReference>
<dbReference type="HOGENOM" id="CLU_016508_2_1_6"/>
<dbReference type="InParanoid" id="P77713"/>
<dbReference type="OMA" id="QQDDRVW"/>
<dbReference type="OrthoDB" id="9801455at2"/>
<dbReference type="PhylomeDB" id="P77713"/>
<dbReference type="BioCyc" id="EcoCyc:G6143-MONOMER"/>
<dbReference type="PRO" id="PR:P77713"/>
<dbReference type="Proteomes" id="UP000000625">
    <property type="component" value="Chromosome"/>
</dbReference>
<dbReference type="GO" id="GO:0009044">
    <property type="term" value="F:xylan 1,4-beta-xylosidase activity"/>
    <property type="evidence" value="ECO:0007669"/>
    <property type="project" value="UniProtKB-EC"/>
</dbReference>
<dbReference type="GO" id="GO:0045493">
    <property type="term" value="P:xylan catabolic process"/>
    <property type="evidence" value="ECO:0007669"/>
    <property type="project" value="UniProtKB-KW"/>
</dbReference>
<dbReference type="CDD" id="cd09000">
    <property type="entry name" value="GH43_SXA-like"/>
    <property type="match status" value="1"/>
</dbReference>
<dbReference type="Gene3D" id="2.60.120.200">
    <property type="match status" value="1"/>
</dbReference>
<dbReference type="Gene3D" id="2.115.10.20">
    <property type="entry name" value="Glycosyl hydrolase domain, family 43"/>
    <property type="match status" value="1"/>
</dbReference>
<dbReference type="InterPro" id="IPR013320">
    <property type="entry name" value="ConA-like_dom_sf"/>
</dbReference>
<dbReference type="InterPro" id="IPR041542">
    <property type="entry name" value="GH43_C2"/>
</dbReference>
<dbReference type="InterPro" id="IPR006710">
    <property type="entry name" value="Glyco_hydro_43"/>
</dbReference>
<dbReference type="InterPro" id="IPR023296">
    <property type="entry name" value="Glyco_hydro_beta-prop_sf"/>
</dbReference>
<dbReference type="InterPro" id="IPR051795">
    <property type="entry name" value="Glycosyl_Hydrlase_43"/>
</dbReference>
<dbReference type="PANTHER" id="PTHR42812">
    <property type="entry name" value="BETA-XYLOSIDASE"/>
    <property type="match status" value="1"/>
</dbReference>
<dbReference type="PANTHER" id="PTHR42812:SF12">
    <property type="entry name" value="BETA-XYLOSIDASE-RELATED"/>
    <property type="match status" value="1"/>
</dbReference>
<dbReference type="Pfam" id="PF17851">
    <property type="entry name" value="GH43_C2"/>
    <property type="match status" value="1"/>
</dbReference>
<dbReference type="Pfam" id="PF04616">
    <property type="entry name" value="Glyco_hydro_43"/>
    <property type="match status" value="1"/>
</dbReference>
<dbReference type="SUPFAM" id="SSF75005">
    <property type="entry name" value="Arabinanase/levansucrase/invertase"/>
    <property type="match status" value="1"/>
</dbReference>
<dbReference type="SUPFAM" id="SSF49899">
    <property type="entry name" value="Concanavalin A-like lectins/glucanases"/>
    <property type="match status" value="1"/>
</dbReference>